<sequence length="182" mass="21035">MMAFWKIFFKHHNIFSSNLNNQLVNQDAADKILLVKYLEGRGTIVNVYLSFNSYVNLHDLEKLCDSVGWVRRPLKKVKIAIDNSFVTASLFYEQNKKKFLIGFARATSDTSFNATIWDVVIHPDFQGQGLGKMLMAQIIKQLRYEDINTITLFADPQVVNFYKHLGFITDPDGVKGMFWYPL</sequence>
<evidence type="ECO:0000255" key="1">
    <source>
        <dbReference type="PROSITE-ProRule" id="PRU00532"/>
    </source>
</evidence>
<evidence type="ECO:0000305" key="2"/>
<comment type="subcellular location">
    <subcellularLocation>
        <location>Plastid</location>
        <location>Chloroplast</location>
    </subcellularLocation>
</comment>
<comment type="similarity">
    <text evidence="2">Belongs to the acetyltransferase family. Ycf52 subfamily.</text>
</comment>
<proteinExistence type="inferred from homology"/>
<name>YCF52_GRATL</name>
<protein>
    <recommendedName>
        <fullName>Uncharacterized N-acetyltransferase ycf52</fullName>
        <ecNumber>2.3.1.-</ecNumber>
    </recommendedName>
</protein>
<accession>Q6B949</accession>
<keyword id="KW-0012">Acyltransferase</keyword>
<keyword id="KW-0150">Chloroplast</keyword>
<keyword id="KW-0934">Plastid</keyword>
<keyword id="KW-0808">Transferase</keyword>
<dbReference type="EC" id="2.3.1.-"/>
<dbReference type="EMBL" id="AY673996">
    <property type="protein sequence ID" value="AAT79586.1"/>
    <property type="molecule type" value="Genomic_DNA"/>
</dbReference>
<dbReference type="RefSeq" id="YP_063511.1">
    <property type="nucleotide sequence ID" value="NC_006137.1"/>
</dbReference>
<dbReference type="SMR" id="Q6B949"/>
<dbReference type="GeneID" id="2944129"/>
<dbReference type="GO" id="GO:0009507">
    <property type="term" value="C:chloroplast"/>
    <property type="evidence" value="ECO:0007669"/>
    <property type="project" value="UniProtKB-SubCell"/>
</dbReference>
<dbReference type="GO" id="GO:0008080">
    <property type="term" value="F:N-acetyltransferase activity"/>
    <property type="evidence" value="ECO:0007669"/>
    <property type="project" value="InterPro"/>
</dbReference>
<dbReference type="CDD" id="cd04301">
    <property type="entry name" value="NAT_SF"/>
    <property type="match status" value="1"/>
</dbReference>
<dbReference type="Gene3D" id="3.40.630.30">
    <property type="match status" value="1"/>
</dbReference>
<dbReference type="InterPro" id="IPR016181">
    <property type="entry name" value="Acyl_CoA_acyltransferase"/>
</dbReference>
<dbReference type="InterPro" id="IPR000182">
    <property type="entry name" value="GNAT_dom"/>
</dbReference>
<dbReference type="InterPro" id="IPR045039">
    <property type="entry name" value="NSI-like"/>
</dbReference>
<dbReference type="PANTHER" id="PTHR43626">
    <property type="entry name" value="ACYL-COA N-ACYLTRANSFERASE"/>
    <property type="match status" value="1"/>
</dbReference>
<dbReference type="PANTHER" id="PTHR43626:SF4">
    <property type="entry name" value="GCN5-RELATED N-ACETYLTRANSFERASE 2, CHLOROPLASTIC"/>
    <property type="match status" value="1"/>
</dbReference>
<dbReference type="Pfam" id="PF00583">
    <property type="entry name" value="Acetyltransf_1"/>
    <property type="match status" value="1"/>
</dbReference>
<dbReference type="SUPFAM" id="SSF55729">
    <property type="entry name" value="Acyl-CoA N-acyltransferases (Nat)"/>
    <property type="match status" value="1"/>
</dbReference>
<dbReference type="PROSITE" id="PS51186">
    <property type="entry name" value="GNAT"/>
    <property type="match status" value="1"/>
</dbReference>
<geneLocation type="chloroplast"/>
<gene>
    <name type="primary">ycf52</name>
    <name type="ordered locus">Grc000004</name>
</gene>
<organism>
    <name type="scientific">Gracilaria tenuistipitata var. liui</name>
    <name type="common">Red alga</name>
    <dbReference type="NCBI Taxonomy" id="285951"/>
    <lineage>
        <taxon>Eukaryota</taxon>
        <taxon>Rhodophyta</taxon>
        <taxon>Florideophyceae</taxon>
        <taxon>Rhodymeniophycidae</taxon>
        <taxon>Gracilariales</taxon>
        <taxon>Gracilariaceae</taxon>
        <taxon>Gracilaria</taxon>
        <taxon>Gracilaria tenuistipitata</taxon>
    </lineage>
</organism>
<reference key="1">
    <citation type="journal article" date="2004" name="J. Mol. Evol.">
        <title>Comparative analysis of the complete plastid genome sequence of the red alga Gracilaria tenuistipitata var. liui provides insights into the evolution of rhodoplasts and their relationship to other plastids.</title>
        <authorList>
            <person name="Hagopian J.C."/>
            <person name="Reis M."/>
            <person name="Kitajima J.P."/>
            <person name="Bhattacharya D."/>
            <person name="de Oliveira M.C."/>
        </authorList>
    </citation>
    <scope>NUCLEOTIDE SEQUENCE [LARGE SCALE GENOMIC DNA]</scope>
</reference>
<feature type="chain" id="PRO_0000277388" description="Uncharacterized N-acetyltransferase ycf52">
    <location>
        <begin position="1"/>
        <end position="182"/>
    </location>
</feature>
<feature type="domain" description="N-acetyltransferase" evidence="1">
    <location>
        <begin position="55"/>
        <end position="182"/>
    </location>
</feature>